<reference key="1">
    <citation type="journal article" date="1998" name="Science">
        <title>Complete genome sequence of Treponema pallidum, the syphilis spirochete.</title>
        <authorList>
            <person name="Fraser C.M."/>
            <person name="Norris S.J."/>
            <person name="Weinstock G.M."/>
            <person name="White O."/>
            <person name="Sutton G.G."/>
            <person name="Dodson R.J."/>
            <person name="Gwinn M.L."/>
            <person name="Hickey E.K."/>
            <person name="Clayton R.A."/>
            <person name="Ketchum K.A."/>
            <person name="Sodergren E."/>
            <person name="Hardham J.M."/>
            <person name="McLeod M.P."/>
            <person name="Salzberg S.L."/>
            <person name="Peterson J.D."/>
            <person name="Khalak H.G."/>
            <person name="Richardson D.L."/>
            <person name="Howell J.K."/>
            <person name="Chidambaram M."/>
            <person name="Utterback T.R."/>
            <person name="McDonald L.A."/>
            <person name="Artiach P."/>
            <person name="Bowman C."/>
            <person name="Cotton M.D."/>
            <person name="Fujii C."/>
            <person name="Garland S.A."/>
            <person name="Hatch B."/>
            <person name="Horst K."/>
            <person name="Roberts K.M."/>
            <person name="Sandusky M."/>
            <person name="Weidman J.F."/>
            <person name="Smith H.O."/>
            <person name="Venter J.C."/>
        </authorList>
    </citation>
    <scope>NUCLEOTIDE SEQUENCE [LARGE SCALE GENOMIC DNA]</scope>
    <source>
        <strain>Nichols</strain>
    </source>
</reference>
<sequence length="340" mass="37520">MEWCCALSGLLPEEIQKVCAFAERFRGVQVFRWIAAGCTDFHAMSDLSSETRARLARACVISDTRVYTTLRDVDGTLKLGIELKDKRRVEAVLLVDQVSRKTACLSCQVGCPMACAFCQTGQLGFARNLSASEIVEQFLHLERCVGTLDNVVFMGMGEPMLNLDAVCRAIEILSHPQGRDLSEKRITISTSGHCRGIYSLADRALQVRLAVSLTTANAPLRARLMPRAAHDSLAKLKSAIRYFNEKSGKRVTLELALMRGVNTSERHAQEVIDFAHGLNVHVNLIPWNPVASIHFETPREVEVAHFEALLMRARIPVTRRYQRGNGIGGACGQLGKTAGV</sequence>
<evidence type="ECO:0000255" key="1">
    <source>
        <dbReference type="HAMAP-Rule" id="MF_01849"/>
    </source>
</evidence>
<evidence type="ECO:0000255" key="2">
    <source>
        <dbReference type="PROSITE-ProRule" id="PRU01266"/>
    </source>
</evidence>
<dbReference type="EC" id="2.1.1.192" evidence="1"/>
<dbReference type="EMBL" id="AE000520">
    <property type="protein sequence ID" value="AAC65061.1"/>
    <property type="molecule type" value="Genomic_DNA"/>
</dbReference>
<dbReference type="PIR" id="D71371">
    <property type="entry name" value="D71371"/>
</dbReference>
<dbReference type="RefSeq" id="WP_010881517.1">
    <property type="nucleotide sequence ID" value="NC_021490.2"/>
</dbReference>
<dbReference type="SMR" id="O83107"/>
<dbReference type="IntAct" id="O83107">
    <property type="interactions" value="7"/>
</dbReference>
<dbReference type="STRING" id="243276.TP_0068"/>
<dbReference type="EnsemblBacteria" id="AAC65061">
    <property type="protein sequence ID" value="AAC65061"/>
    <property type="gene ID" value="TP_0068"/>
</dbReference>
<dbReference type="GeneID" id="93875863"/>
<dbReference type="KEGG" id="tpa:TP_0068"/>
<dbReference type="KEGG" id="tpw:TPANIC_0068"/>
<dbReference type="eggNOG" id="COG0820">
    <property type="taxonomic scope" value="Bacteria"/>
</dbReference>
<dbReference type="HOGENOM" id="CLU_029101_0_0_12"/>
<dbReference type="OrthoDB" id="9793973at2"/>
<dbReference type="Proteomes" id="UP000000811">
    <property type="component" value="Chromosome"/>
</dbReference>
<dbReference type="GO" id="GO:0005737">
    <property type="term" value="C:cytoplasm"/>
    <property type="evidence" value="ECO:0007669"/>
    <property type="project" value="UniProtKB-SubCell"/>
</dbReference>
<dbReference type="GO" id="GO:0051539">
    <property type="term" value="F:4 iron, 4 sulfur cluster binding"/>
    <property type="evidence" value="ECO:0007669"/>
    <property type="project" value="UniProtKB-UniRule"/>
</dbReference>
<dbReference type="GO" id="GO:0046872">
    <property type="term" value="F:metal ion binding"/>
    <property type="evidence" value="ECO:0007669"/>
    <property type="project" value="UniProtKB-KW"/>
</dbReference>
<dbReference type="GO" id="GO:0070040">
    <property type="term" value="F:rRNA (adenine(2503)-C2-)-methyltransferase activity"/>
    <property type="evidence" value="ECO:0007669"/>
    <property type="project" value="UniProtKB-UniRule"/>
</dbReference>
<dbReference type="GO" id="GO:0019843">
    <property type="term" value="F:rRNA binding"/>
    <property type="evidence" value="ECO:0007669"/>
    <property type="project" value="UniProtKB-UniRule"/>
</dbReference>
<dbReference type="GO" id="GO:0002935">
    <property type="term" value="F:tRNA (adenine(37)-C2)-methyltransferase activity"/>
    <property type="evidence" value="ECO:0007669"/>
    <property type="project" value="UniProtKB-UniRule"/>
</dbReference>
<dbReference type="GO" id="GO:0000049">
    <property type="term" value="F:tRNA binding"/>
    <property type="evidence" value="ECO:0007669"/>
    <property type="project" value="UniProtKB-UniRule"/>
</dbReference>
<dbReference type="GO" id="GO:0070475">
    <property type="term" value="P:rRNA base methylation"/>
    <property type="evidence" value="ECO:0007669"/>
    <property type="project" value="UniProtKB-UniRule"/>
</dbReference>
<dbReference type="GO" id="GO:0030488">
    <property type="term" value="P:tRNA methylation"/>
    <property type="evidence" value="ECO:0007669"/>
    <property type="project" value="UniProtKB-UniRule"/>
</dbReference>
<dbReference type="CDD" id="cd01335">
    <property type="entry name" value="Radical_SAM"/>
    <property type="match status" value="1"/>
</dbReference>
<dbReference type="Gene3D" id="1.10.150.530">
    <property type="match status" value="1"/>
</dbReference>
<dbReference type="Gene3D" id="3.20.20.70">
    <property type="entry name" value="Aldolase class I"/>
    <property type="match status" value="1"/>
</dbReference>
<dbReference type="HAMAP" id="MF_01849">
    <property type="entry name" value="RNA_methyltr_RlmN"/>
    <property type="match status" value="1"/>
</dbReference>
<dbReference type="InterPro" id="IPR013785">
    <property type="entry name" value="Aldolase_TIM"/>
</dbReference>
<dbReference type="InterPro" id="IPR040072">
    <property type="entry name" value="Methyltransferase_A"/>
</dbReference>
<dbReference type="InterPro" id="IPR048641">
    <property type="entry name" value="RlmN_N"/>
</dbReference>
<dbReference type="InterPro" id="IPR027492">
    <property type="entry name" value="RNA_MTrfase_RlmN"/>
</dbReference>
<dbReference type="InterPro" id="IPR004383">
    <property type="entry name" value="rRNA_lsu_MTrfase_RlmN/Cfr"/>
</dbReference>
<dbReference type="InterPro" id="IPR007197">
    <property type="entry name" value="rSAM"/>
</dbReference>
<dbReference type="NCBIfam" id="TIGR00048">
    <property type="entry name" value="rRNA_mod_RlmN"/>
    <property type="match status" value="1"/>
</dbReference>
<dbReference type="PANTHER" id="PTHR30544">
    <property type="entry name" value="23S RRNA METHYLTRANSFERASE"/>
    <property type="match status" value="1"/>
</dbReference>
<dbReference type="PANTHER" id="PTHR30544:SF5">
    <property type="entry name" value="RADICAL SAM CORE DOMAIN-CONTAINING PROTEIN"/>
    <property type="match status" value="1"/>
</dbReference>
<dbReference type="Pfam" id="PF04055">
    <property type="entry name" value="Radical_SAM"/>
    <property type="match status" value="1"/>
</dbReference>
<dbReference type="Pfam" id="PF21016">
    <property type="entry name" value="RlmN_N"/>
    <property type="match status" value="1"/>
</dbReference>
<dbReference type="PIRSF" id="PIRSF006004">
    <property type="entry name" value="CHP00048"/>
    <property type="match status" value="1"/>
</dbReference>
<dbReference type="SFLD" id="SFLDF00275">
    <property type="entry name" value="adenosine_C2_methyltransferase"/>
    <property type="match status" value="1"/>
</dbReference>
<dbReference type="SFLD" id="SFLDG01062">
    <property type="entry name" value="methyltransferase_(Class_A)"/>
    <property type="match status" value="1"/>
</dbReference>
<dbReference type="SUPFAM" id="SSF102114">
    <property type="entry name" value="Radical SAM enzymes"/>
    <property type="match status" value="1"/>
</dbReference>
<dbReference type="PROSITE" id="PS51918">
    <property type="entry name" value="RADICAL_SAM"/>
    <property type="match status" value="1"/>
</dbReference>
<feature type="chain" id="PRO_0000350509" description="Probable dual-specificity RNA methyltransferase RlmN">
    <location>
        <begin position="1"/>
        <end position="340"/>
    </location>
</feature>
<feature type="domain" description="Radical SAM core" evidence="2">
    <location>
        <begin position="97"/>
        <end position="325"/>
    </location>
</feature>
<feature type="active site" description="Proton acceptor" evidence="1">
    <location>
        <position position="90"/>
    </location>
</feature>
<feature type="active site" description="S-methylcysteine intermediate" evidence="1">
    <location>
        <position position="331"/>
    </location>
</feature>
<feature type="binding site" evidence="1">
    <location>
        <position position="111"/>
    </location>
    <ligand>
        <name>[4Fe-4S] cluster</name>
        <dbReference type="ChEBI" id="CHEBI:49883"/>
        <note>4Fe-4S-S-AdoMet</note>
    </ligand>
</feature>
<feature type="binding site" evidence="1">
    <location>
        <position position="115"/>
    </location>
    <ligand>
        <name>[4Fe-4S] cluster</name>
        <dbReference type="ChEBI" id="CHEBI:49883"/>
        <note>4Fe-4S-S-AdoMet</note>
    </ligand>
</feature>
<feature type="binding site" evidence="1">
    <location>
        <position position="118"/>
    </location>
    <ligand>
        <name>[4Fe-4S] cluster</name>
        <dbReference type="ChEBI" id="CHEBI:49883"/>
        <note>4Fe-4S-S-AdoMet</note>
    </ligand>
</feature>
<feature type="binding site" evidence="1">
    <location>
        <begin position="157"/>
        <end position="158"/>
    </location>
    <ligand>
        <name>S-adenosyl-L-methionine</name>
        <dbReference type="ChEBI" id="CHEBI:59789"/>
    </ligand>
</feature>
<feature type="binding site" evidence="1">
    <location>
        <position position="189"/>
    </location>
    <ligand>
        <name>S-adenosyl-L-methionine</name>
        <dbReference type="ChEBI" id="CHEBI:59789"/>
    </ligand>
</feature>
<feature type="binding site" evidence="1">
    <location>
        <begin position="212"/>
        <end position="214"/>
    </location>
    <ligand>
        <name>S-adenosyl-L-methionine</name>
        <dbReference type="ChEBI" id="CHEBI:59789"/>
    </ligand>
</feature>
<feature type="binding site" evidence="1">
    <location>
        <position position="288"/>
    </location>
    <ligand>
        <name>S-adenosyl-L-methionine</name>
        <dbReference type="ChEBI" id="CHEBI:59789"/>
    </ligand>
</feature>
<feature type="disulfide bond" description="(transient)" evidence="1">
    <location>
        <begin position="104"/>
        <end position="331"/>
    </location>
</feature>
<name>RLMN_TREPA</name>
<organism>
    <name type="scientific">Treponema pallidum (strain Nichols)</name>
    <dbReference type="NCBI Taxonomy" id="243276"/>
    <lineage>
        <taxon>Bacteria</taxon>
        <taxon>Pseudomonadati</taxon>
        <taxon>Spirochaetota</taxon>
        <taxon>Spirochaetia</taxon>
        <taxon>Spirochaetales</taxon>
        <taxon>Treponemataceae</taxon>
        <taxon>Treponema</taxon>
    </lineage>
</organism>
<accession>O83107</accession>
<comment type="function">
    <text evidence="1">Specifically methylates position 2 of adenine 2503 in 23S rRNA and position 2 of adenine 37 in tRNAs.</text>
</comment>
<comment type="catalytic activity">
    <reaction evidence="1">
        <text>adenosine(2503) in 23S rRNA + 2 reduced [2Fe-2S]-[ferredoxin] + 2 S-adenosyl-L-methionine = 2-methyladenosine(2503) in 23S rRNA + 5'-deoxyadenosine + L-methionine + 2 oxidized [2Fe-2S]-[ferredoxin] + S-adenosyl-L-homocysteine</text>
        <dbReference type="Rhea" id="RHEA:42916"/>
        <dbReference type="Rhea" id="RHEA-COMP:10000"/>
        <dbReference type="Rhea" id="RHEA-COMP:10001"/>
        <dbReference type="Rhea" id="RHEA-COMP:10152"/>
        <dbReference type="Rhea" id="RHEA-COMP:10282"/>
        <dbReference type="ChEBI" id="CHEBI:17319"/>
        <dbReference type="ChEBI" id="CHEBI:33737"/>
        <dbReference type="ChEBI" id="CHEBI:33738"/>
        <dbReference type="ChEBI" id="CHEBI:57844"/>
        <dbReference type="ChEBI" id="CHEBI:57856"/>
        <dbReference type="ChEBI" id="CHEBI:59789"/>
        <dbReference type="ChEBI" id="CHEBI:74411"/>
        <dbReference type="ChEBI" id="CHEBI:74497"/>
        <dbReference type="EC" id="2.1.1.192"/>
    </reaction>
</comment>
<comment type="catalytic activity">
    <reaction evidence="1">
        <text>adenosine(37) in tRNA + 2 reduced [2Fe-2S]-[ferredoxin] + 2 S-adenosyl-L-methionine = 2-methyladenosine(37) in tRNA + 5'-deoxyadenosine + L-methionine + 2 oxidized [2Fe-2S]-[ferredoxin] + S-adenosyl-L-homocysteine</text>
        <dbReference type="Rhea" id="RHEA:43332"/>
        <dbReference type="Rhea" id="RHEA-COMP:10000"/>
        <dbReference type="Rhea" id="RHEA-COMP:10001"/>
        <dbReference type="Rhea" id="RHEA-COMP:10162"/>
        <dbReference type="Rhea" id="RHEA-COMP:10485"/>
        <dbReference type="ChEBI" id="CHEBI:17319"/>
        <dbReference type="ChEBI" id="CHEBI:33737"/>
        <dbReference type="ChEBI" id="CHEBI:33738"/>
        <dbReference type="ChEBI" id="CHEBI:57844"/>
        <dbReference type="ChEBI" id="CHEBI:57856"/>
        <dbReference type="ChEBI" id="CHEBI:59789"/>
        <dbReference type="ChEBI" id="CHEBI:74411"/>
        <dbReference type="ChEBI" id="CHEBI:74497"/>
        <dbReference type="EC" id="2.1.1.192"/>
    </reaction>
</comment>
<comment type="cofactor">
    <cofactor evidence="1">
        <name>[4Fe-4S] cluster</name>
        <dbReference type="ChEBI" id="CHEBI:49883"/>
    </cofactor>
    <text evidence="1">Binds 1 [4Fe-4S] cluster. The cluster is coordinated with 3 cysteines and an exchangeable S-adenosyl-L-methionine.</text>
</comment>
<comment type="interaction">
    <interactant intactId="EBI-1585371">
        <id>O83107</id>
    </interactant>
    <interactant intactId="EBI-1582351">
        <id>O83970</id>
        <label>dnaX</label>
    </interactant>
    <organismsDiffer>false</organismsDiffer>
    <experiments>2</experiments>
</comment>
<comment type="subcellular location">
    <subcellularLocation>
        <location evidence="1">Cytoplasm</location>
    </subcellularLocation>
</comment>
<comment type="miscellaneous">
    <text evidence="1">Reaction proceeds by a ping-pong mechanism involving intermediate methylation of a conserved cysteine residue.</text>
</comment>
<comment type="similarity">
    <text evidence="1">Belongs to the radical SAM superfamily. RlmN family.</text>
</comment>
<keyword id="KW-0004">4Fe-4S</keyword>
<keyword id="KW-0963">Cytoplasm</keyword>
<keyword id="KW-1015">Disulfide bond</keyword>
<keyword id="KW-0408">Iron</keyword>
<keyword id="KW-0411">Iron-sulfur</keyword>
<keyword id="KW-0479">Metal-binding</keyword>
<keyword id="KW-0489">Methyltransferase</keyword>
<keyword id="KW-1185">Reference proteome</keyword>
<keyword id="KW-0698">rRNA processing</keyword>
<keyword id="KW-0949">S-adenosyl-L-methionine</keyword>
<keyword id="KW-0808">Transferase</keyword>
<keyword id="KW-0819">tRNA processing</keyword>
<proteinExistence type="evidence at protein level"/>
<gene>
    <name evidence="1" type="primary">rlmN</name>
    <name type="ordered locus">TP_0068</name>
</gene>
<protein>
    <recommendedName>
        <fullName evidence="1">Probable dual-specificity RNA methyltransferase RlmN</fullName>
        <ecNumber evidence="1">2.1.1.192</ecNumber>
    </recommendedName>
    <alternativeName>
        <fullName evidence="1">23S rRNA (adenine(2503)-C(2))-methyltransferase</fullName>
    </alternativeName>
    <alternativeName>
        <fullName evidence="1">23S rRNA m2A2503 methyltransferase</fullName>
    </alternativeName>
    <alternativeName>
        <fullName evidence="1">Ribosomal RNA large subunit methyltransferase N</fullName>
    </alternativeName>
    <alternativeName>
        <fullName evidence="1">tRNA (adenine(37)-C(2))-methyltransferase</fullName>
    </alternativeName>
    <alternativeName>
        <fullName evidence="1">tRNA m2A37 methyltransferase</fullName>
    </alternativeName>
</protein>